<organism>
    <name type="scientific">Magnetococcus marinus (strain ATCC BAA-1437 / JCM 17883 / MC-1)</name>
    <dbReference type="NCBI Taxonomy" id="156889"/>
    <lineage>
        <taxon>Bacteria</taxon>
        <taxon>Pseudomonadati</taxon>
        <taxon>Pseudomonadota</taxon>
        <taxon>Alphaproteobacteria</taxon>
        <taxon>Magnetococcales</taxon>
        <taxon>Magnetococcaceae</taxon>
        <taxon>Magnetococcus</taxon>
    </lineage>
</organism>
<protein>
    <recommendedName>
        <fullName evidence="1">Nucleotide-binding protein Mmc1_3333</fullName>
    </recommendedName>
</protein>
<feature type="chain" id="PRO_0000383262" description="Nucleotide-binding protein Mmc1_3333">
    <location>
        <begin position="1"/>
        <end position="310"/>
    </location>
</feature>
<feature type="binding site" evidence="1">
    <location>
        <begin position="19"/>
        <end position="26"/>
    </location>
    <ligand>
        <name>ATP</name>
        <dbReference type="ChEBI" id="CHEBI:30616"/>
    </ligand>
</feature>
<reference key="1">
    <citation type="journal article" date="2009" name="Appl. Environ. Microbiol.">
        <title>Complete genome sequence of the chemolithoautotrophic marine magnetotactic coccus strain MC-1.</title>
        <authorList>
            <person name="Schubbe S."/>
            <person name="Williams T.J."/>
            <person name="Xie G."/>
            <person name="Kiss H.E."/>
            <person name="Brettin T.S."/>
            <person name="Martinez D."/>
            <person name="Ross C.A."/>
            <person name="Schuler D."/>
            <person name="Cox B.L."/>
            <person name="Nealson K.H."/>
            <person name="Bazylinski D.A."/>
        </authorList>
    </citation>
    <scope>NUCLEOTIDE SEQUENCE [LARGE SCALE GENOMIC DNA]</scope>
    <source>
        <strain>ATCC BAA-1437 / JCM 17883 / MC-1</strain>
    </source>
</reference>
<proteinExistence type="inferred from homology"/>
<keyword id="KW-0067">ATP-binding</keyword>
<keyword id="KW-0342">GTP-binding</keyword>
<keyword id="KW-0547">Nucleotide-binding</keyword>
<keyword id="KW-1185">Reference proteome</keyword>
<sequence length="310" mass="35209">MDEHGVQTPQVTSLIVVAGLSGAGKSTALKSLEDIGYLWIDNPPLLALPGLMRELSESTEDSHVAVGLHMREHGRDPDAWQRLQPILQEMTARLELLYLEADSDILVKRFRETRRRHPLAGRNMAGGGGEALRTVKEAVEEERLRMQPVRAQANLVIDTTYLRPQMLQERVADLFRMDAHNTQGITLFVRSLGFKYGSNTDADMVLDARFLQNPYYDLALRELTGMDAPVRAFLDRDGEAEQFLTHLQGLFGYLIPRYIKERKCYFTVDIGCTGGQHRSVYLVDRLGEMLGQMGYRVVVRHRDMHRKSAK</sequence>
<evidence type="ECO:0000255" key="1">
    <source>
        <dbReference type="HAMAP-Rule" id="MF_00636"/>
    </source>
</evidence>
<dbReference type="EMBL" id="CP000471">
    <property type="protein sequence ID" value="ABK45819.1"/>
    <property type="molecule type" value="Genomic_DNA"/>
</dbReference>
<dbReference type="SMR" id="A0LCX6"/>
<dbReference type="STRING" id="156889.Mmc1_3333"/>
<dbReference type="KEGG" id="mgm:Mmc1_3333"/>
<dbReference type="eggNOG" id="COG1660">
    <property type="taxonomic scope" value="Bacteria"/>
</dbReference>
<dbReference type="HOGENOM" id="CLU_059558_0_0_5"/>
<dbReference type="Proteomes" id="UP000002586">
    <property type="component" value="Chromosome"/>
</dbReference>
<dbReference type="GO" id="GO:0005524">
    <property type="term" value="F:ATP binding"/>
    <property type="evidence" value="ECO:0007669"/>
    <property type="project" value="UniProtKB-UniRule"/>
</dbReference>
<dbReference type="GO" id="GO:0005525">
    <property type="term" value="F:GTP binding"/>
    <property type="evidence" value="ECO:0007669"/>
    <property type="project" value="UniProtKB-UniRule"/>
</dbReference>
<dbReference type="CDD" id="cd02019">
    <property type="entry name" value="NK"/>
    <property type="match status" value="1"/>
</dbReference>
<dbReference type="HAMAP" id="MF_00636">
    <property type="entry name" value="RapZ_like"/>
    <property type="match status" value="1"/>
</dbReference>
<dbReference type="InterPro" id="IPR027417">
    <property type="entry name" value="P-loop_NTPase"/>
</dbReference>
<dbReference type="InterPro" id="IPR005337">
    <property type="entry name" value="RapZ-like"/>
</dbReference>
<dbReference type="InterPro" id="IPR053930">
    <property type="entry name" value="RapZ-like_N"/>
</dbReference>
<dbReference type="InterPro" id="IPR053931">
    <property type="entry name" value="RapZ_C"/>
</dbReference>
<dbReference type="NCBIfam" id="NF003828">
    <property type="entry name" value="PRK05416.1"/>
    <property type="match status" value="1"/>
</dbReference>
<dbReference type="PANTHER" id="PTHR30448">
    <property type="entry name" value="RNASE ADAPTER PROTEIN RAPZ"/>
    <property type="match status" value="1"/>
</dbReference>
<dbReference type="PANTHER" id="PTHR30448:SF0">
    <property type="entry name" value="RNASE ADAPTER PROTEIN RAPZ"/>
    <property type="match status" value="1"/>
</dbReference>
<dbReference type="Pfam" id="PF22740">
    <property type="entry name" value="PapZ_C"/>
    <property type="match status" value="1"/>
</dbReference>
<dbReference type="Pfam" id="PF03668">
    <property type="entry name" value="RapZ-like_N"/>
    <property type="match status" value="1"/>
</dbReference>
<dbReference type="PIRSF" id="PIRSF005052">
    <property type="entry name" value="P-loopkin"/>
    <property type="match status" value="1"/>
</dbReference>
<dbReference type="SUPFAM" id="SSF52540">
    <property type="entry name" value="P-loop containing nucleoside triphosphate hydrolases"/>
    <property type="match status" value="1"/>
</dbReference>
<name>Y3333_MAGMM</name>
<comment type="function">
    <text evidence="1">Displays ATPase and GTPase activities.</text>
</comment>
<comment type="similarity">
    <text evidence="1">Belongs to the RapZ-like family.</text>
</comment>
<accession>A0LCX6</accession>
<gene>
    <name type="ordered locus">Mmc1_3333</name>
</gene>